<accession>Q6EUW1</accession>
<accession>Q5XG59</accession>
<organism>
    <name type="scientific">Xenopus laevis</name>
    <name type="common">African clawed frog</name>
    <dbReference type="NCBI Taxonomy" id="8355"/>
    <lineage>
        <taxon>Eukaryota</taxon>
        <taxon>Metazoa</taxon>
        <taxon>Chordata</taxon>
        <taxon>Craniata</taxon>
        <taxon>Vertebrata</taxon>
        <taxon>Euteleostomi</taxon>
        <taxon>Amphibia</taxon>
        <taxon>Batrachia</taxon>
        <taxon>Anura</taxon>
        <taxon>Pipoidea</taxon>
        <taxon>Pipidae</taxon>
        <taxon>Xenopodinae</taxon>
        <taxon>Xenopus</taxon>
        <taxon>Xenopus</taxon>
    </lineage>
</organism>
<proteinExistence type="evidence at transcript level"/>
<dbReference type="EMBL" id="AJ783964">
    <property type="protein sequence ID" value="CAH04457.1"/>
    <property type="molecule type" value="mRNA"/>
</dbReference>
<dbReference type="EMBL" id="BC084603">
    <property type="protein sequence ID" value="AAH84603.1"/>
    <property type="molecule type" value="mRNA"/>
</dbReference>
<dbReference type="SMR" id="Q6EUW1"/>
<dbReference type="KEGG" id="xla:444992"/>
<dbReference type="AGR" id="Xenbase:XB-GENE-945076"/>
<dbReference type="CTD" id="444992"/>
<dbReference type="Xenbase" id="XB-GENE-945076">
    <property type="gene designation" value="foxo3.L"/>
</dbReference>
<dbReference type="OrthoDB" id="5954824at2759"/>
<dbReference type="Proteomes" id="UP000186698">
    <property type="component" value="Chromosome 5L"/>
</dbReference>
<dbReference type="Bgee" id="444992">
    <property type="expression patterns" value="Expressed in muscle tissue and 19 other cell types or tissues"/>
</dbReference>
<dbReference type="GO" id="GO:0005737">
    <property type="term" value="C:cytoplasm"/>
    <property type="evidence" value="ECO:0000250"/>
    <property type="project" value="UniProtKB"/>
</dbReference>
<dbReference type="GO" id="GO:0005829">
    <property type="term" value="C:cytosol"/>
    <property type="evidence" value="ECO:0000250"/>
    <property type="project" value="UniProtKB"/>
</dbReference>
<dbReference type="GO" id="GO:0005759">
    <property type="term" value="C:mitochondrial matrix"/>
    <property type="evidence" value="ECO:0007669"/>
    <property type="project" value="TreeGrafter"/>
</dbReference>
<dbReference type="GO" id="GO:0005634">
    <property type="term" value="C:nucleus"/>
    <property type="evidence" value="ECO:0000250"/>
    <property type="project" value="UniProtKB"/>
</dbReference>
<dbReference type="GO" id="GO:0031490">
    <property type="term" value="F:chromatin DNA binding"/>
    <property type="evidence" value="ECO:0000250"/>
    <property type="project" value="UniProtKB"/>
</dbReference>
<dbReference type="GO" id="GO:0001228">
    <property type="term" value="F:DNA-binding transcription activator activity, RNA polymerase II-specific"/>
    <property type="evidence" value="ECO:0000250"/>
    <property type="project" value="UniProtKB"/>
</dbReference>
<dbReference type="GO" id="GO:0003700">
    <property type="term" value="F:DNA-binding transcription factor activity"/>
    <property type="evidence" value="ECO:0000250"/>
    <property type="project" value="UniProtKB"/>
</dbReference>
<dbReference type="GO" id="GO:0000981">
    <property type="term" value="F:DNA-binding transcription factor activity, RNA polymerase II-specific"/>
    <property type="evidence" value="ECO:0000318"/>
    <property type="project" value="GO_Central"/>
</dbReference>
<dbReference type="GO" id="GO:0019901">
    <property type="term" value="F:protein kinase binding"/>
    <property type="evidence" value="ECO:0000250"/>
    <property type="project" value="UniProtKB"/>
</dbReference>
<dbReference type="GO" id="GO:0000978">
    <property type="term" value="F:RNA polymerase II cis-regulatory region sequence-specific DNA binding"/>
    <property type="evidence" value="ECO:0000250"/>
    <property type="project" value="UniProtKB"/>
</dbReference>
<dbReference type="GO" id="GO:0043565">
    <property type="term" value="F:sequence-specific DNA binding"/>
    <property type="evidence" value="ECO:0000250"/>
    <property type="project" value="UniProtKB"/>
</dbReference>
<dbReference type="GO" id="GO:0006915">
    <property type="term" value="P:apoptotic process"/>
    <property type="evidence" value="ECO:0007669"/>
    <property type="project" value="UniProtKB-KW"/>
</dbReference>
<dbReference type="GO" id="GO:0034599">
    <property type="term" value="P:cellular response to oxidative stress"/>
    <property type="evidence" value="ECO:0000250"/>
    <property type="project" value="UniProtKB"/>
</dbReference>
<dbReference type="GO" id="GO:0010508">
    <property type="term" value="P:positive regulation of autophagy"/>
    <property type="evidence" value="ECO:0000250"/>
    <property type="project" value="UniProtKB"/>
</dbReference>
<dbReference type="GO" id="GO:0045893">
    <property type="term" value="P:positive regulation of DNA-templated transcription"/>
    <property type="evidence" value="ECO:0000250"/>
    <property type="project" value="UniProtKB"/>
</dbReference>
<dbReference type="GO" id="GO:0014737">
    <property type="term" value="P:positive regulation of muscle atrophy"/>
    <property type="evidence" value="ECO:0000250"/>
    <property type="project" value="UniProtKB"/>
</dbReference>
<dbReference type="GO" id="GO:0043525">
    <property type="term" value="P:positive regulation of neuron apoptotic process"/>
    <property type="evidence" value="ECO:0000250"/>
    <property type="project" value="UniProtKB"/>
</dbReference>
<dbReference type="GO" id="GO:0045591">
    <property type="term" value="P:positive regulation of regulatory T cell differentiation"/>
    <property type="evidence" value="ECO:0000250"/>
    <property type="project" value="UniProtKB"/>
</dbReference>
<dbReference type="GO" id="GO:0045944">
    <property type="term" value="P:positive regulation of transcription by RNA polymerase II"/>
    <property type="evidence" value="ECO:0000250"/>
    <property type="project" value="UniProtKB"/>
</dbReference>
<dbReference type="GO" id="GO:0006357">
    <property type="term" value="P:regulation of transcription by RNA polymerase II"/>
    <property type="evidence" value="ECO:0000250"/>
    <property type="project" value="UniProtKB"/>
</dbReference>
<dbReference type="GO" id="GO:0070542">
    <property type="term" value="P:response to fatty acid"/>
    <property type="evidence" value="ECO:0000250"/>
    <property type="project" value="UniProtKB"/>
</dbReference>
<dbReference type="GO" id="GO:0042594">
    <property type="term" value="P:response to starvation"/>
    <property type="evidence" value="ECO:0000250"/>
    <property type="project" value="UniProtKB"/>
</dbReference>
<dbReference type="GO" id="GO:0033209">
    <property type="term" value="P:tumor necrosis factor-mediated signaling pathway"/>
    <property type="evidence" value="ECO:0000250"/>
    <property type="project" value="UniProtKB"/>
</dbReference>
<dbReference type="FunFam" id="1.10.10.10:FF:000032">
    <property type="entry name" value="Forkhead box protein O4"/>
    <property type="match status" value="1"/>
</dbReference>
<dbReference type="Gene3D" id="6.10.250.1690">
    <property type="match status" value="2"/>
</dbReference>
<dbReference type="Gene3D" id="1.10.10.10">
    <property type="entry name" value="Winged helix-like DNA-binding domain superfamily/Winged helix DNA-binding domain"/>
    <property type="match status" value="1"/>
</dbReference>
<dbReference type="InterPro" id="IPR001766">
    <property type="entry name" value="Fork_head_dom"/>
</dbReference>
<dbReference type="InterPro" id="IPR032067">
    <property type="entry name" value="FOXO-TAD"/>
</dbReference>
<dbReference type="InterPro" id="IPR032068">
    <property type="entry name" value="FOXO_KIX-bd"/>
</dbReference>
<dbReference type="InterPro" id="IPR030456">
    <property type="entry name" value="TF_fork_head_CS_2"/>
</dbReference>
<dbReference type="InterPro" id="IPR036388">
    <property type="entry name" value="WH-like_DNA-bd_sf"/>
</dbReference>
<dbReference type="InterPro" id="IPR036390">
    <property type="entry name" value="WH_DNA-bd_sf"/>
</dbReference>
<dbReference type="PANTHER" id="PTHR45767">
    <property type="entry name" value="FORKHEAD BOX PROTEIN O"/>
    <property type="match status" value="1"/>
</dbReference>
<dbReference type="PANTHER" id="PTHR45767:SF4">
    <property type="entry name" value="FORKHEAD BOX PROTEIN O3-RELATED"/>
    <property type="match status" value="1"/>
</dbReference>
<dbReference type="Pfam" id="PF00250">
    <property type="entry name" value="Forkhead"/>
    <property type="match status" value="1"/>
</dbReference>
<dbReference type="Pfam" id="PF16676">
    <property type="entry name" value="FOXO-TAD"/>
    <property type="match status" value="1"/>
</dbReference>
<dbReference type="Pfam" id="PF16675">
    <property type="entry name" value="FOXO_KIX_bdg"/>
    <property type="match status" value="1"/>
</dbReference>
<dbReference type="PRINTS" id="PR00053">
    <property type="entry name" value="FORKHEAD"/>
</dbReference>
<dbReference type="SMART" id="SM00339">
    <property type="entry name" value="FH"/>
    <property type="match status" value="1"/>
</dbReference>
<dbReference type="SUPFAM" id="SSF46785">
    <property type="entry name" value="Winged helix' DNA-binding domain"/>
    <property type="match status" value="1"/>
</dbReference>
<dbReference type="PROSITE" id="PS00658">
    <property type="entry name" value="FORK_HEAD_2"/>
    <property type="match status" value="1"/>
</dbReference>
<dbReference type="PROSITE" id="PS50039">
    <property type="entry name" value="FORK_HEAD_3"/>
    <property type="match status" value="1"/>
</dbReference>
<feature type="chain" id="PRO_0000270988" description="Forkhead box protein O3">
    <location>
        <begin position="1"/>
        <end position="657"/>
    </location>
</feature>
<feature type="DNA-binding region" description="Fork-head" evidence="3">
    <location>
        <begin position="142"/>
        <end position="236"/>
    </location>
</feature>
<feature type="region of interest" description="Disordered" evidence="4">
    <location>
        <begin position="1"/>
        <end position="71"/>
    </location>
</feature>
<feature type="region of interest" description="Disordered" evidence="4">
    <location>
        <begin position="216"/>
        <end position="320"/>
    </location>
</feature>
<feature type="compositionally biased region" description="Basic residues" evidence="4">
    <location>
        <begin position="246"/>
        <end position="257"/>
    </location>
</feature>
<feature type="compositionally biased region" description="Polar residues" evidence="4">
    <location>
        <begin position="268"/>
        <end position="283"/>
    </location>
</feature>
<feature type="compositionally biased region" description="Basic and acidic residues" evidence="4">
    <location>
        <begin position="284"/>
        <end position="296"/>
    </location>
</feature>
<feature type="compositionally biased region" description="Polar residues" evidence="4">
    <location>
        <begin position="297"/>
        <end position="307"/>
    </location>
</feature>
<feature type="sequence conflict" description="In Ref. 2; AAH84603." evidence="7" ref="2">
    <original>G</original>
    <variation>E</variation>
    <location>
        <position position="21"/>
    </location>
</feature>
<feature type="sequence conflict" description="In Ref. 2; AAH84603." evidence="7" ref="2">
    <original>G</original>
    <variation>GGGQQ</variation>
    <location>
        <position position="128"/>
    </location>
</feature>
<feature type="sequence conflict" description="In Ref. 2; AAH84603." evidence="7" ref="2">
    <original>K</original>
    <variation>E</variation>
    <location>
        <position position="287"/>
    </location>
</feature>
<name>FOXO3_XENLA</name>
<sequence length="657" mass="70384">MAEALPPRSPPDDVDIDPDFGPQSRPRSCTWPLQRLDSQGSPGKPNSGAGEAADTSSMIPEEEDDDYEGAASTATVLGTAGDKGTLVLLSGGESGQLAVLASPVGGVETLQVSLGGEGAGGAVSGAGGQQQQRKCSSRRNAWGNMSYADLITRAIESTQDKRLTLSQIYDWMVRSVPYFKDKGDSNSSAGWKNSIRHNLSLHSRFIRVQNEGSGKSSWWMINPEGGKGGKAPRRRAVSMDNSNKYTKSRGRAAKKKASLQASSDATDDSPSQLSKWPGSPTSRSSDKLDTWTDFRSRTNSNASTISGRLSPIPATTELDDVQDDDSPLSPMLYNSPGSLSPSISKPCTVEMPRITDMAETMNLNDGLPENLMDDLLDDISLTSSQQSSPGVLMQRSSSFTYGTKGSGIGSPSNNFNNTGSFNFPLTSLRQSPMQTIQENKQATFSSMNHYSNQSLQDLLNTDTLSHSDVLMTQSDPLMSQASTAVTAQNSRRNIILRNDPMMSFAAQPNQGGNLVNQNSLHQQQSLNSFQGGSRALSNNLSNTGLNDSSILESTKHQQQSSVSHSMQTISDTLSGSLYSSGVTLPTLGHEKFPTDLDLDIFNGSLECDMETIIRNDLMDADGLDFNFDTLISAQNVSLSVGSFTGAKQTSSQSWVPG</sequence>
<evidence type="ECO:0000250" key="1">
    <source>
        <dbReference type="UniProtKB" id="O43524"/>
    </source>
</evidence>
<evidence type="ECO:0000250" key="2">
    <source>
        <dbReference type="UniProtKB" id="Q9WVH4"/>
    </source>
</evidence>
<evidence type="ECO:0000255" key="3">
    <source>
        <dbReference type="PROSITE-ProRule" id="PRU00089"/>
    </source>
</evidence>
<evidence type="ECO:0000256" key="4">
    <source>
        <dbReference type="SAM" id="MobiDB-lite"/>
    </source>
</evidence>
<evidence type="ECO:0000269" key="5">
    <source>
    </source>
</evidence>
<evidence type="ECO:0000303" key="6">
    <source>
    </source>
</evidence>
<evidence type="ECO:0000305" key="7"/>
<keyword id="KW-0010">Activator</keyword>
<keyword id="KW-0053">Apoptosis</keyword>
<keyword id="KW-0963">Cytoplasm</keyword>
<keyword id="KW-0238">DNA-binding</keyword>
<keyword id="KW-0539">Nucleus</keyword>
<keyword id="KW-0597">Phosphoprotein</keyword>
<keyword id="KW-1185">Reference proteome</keyword>
<keyword id="KW-0804">Transcription</keyword>
<keyword id="KW-0805">Transcription regulation</keyword>
<reference key="1">
    <citation type="journal article" date="2004" name="Gene Expr. Patterns">
        <title>The FoxO-subclass in Xenopus laevis development.</title>
        <authorList>
            <person name="Pohl B.S."/>
            <person name="Schoen C."/>
            <person name="Roessner A."/>
            <person name="Knoechel W."/>
        </authorList>
    </citation>
    <scope>NUCLEOTIDE SEQUENCE [MRNA]</scope>
    <scope>TISSUE SPECIFICITY</scope>
    <scope>DEVELOPMENTAL STAGE</scope>
    <source>
        <tissue>Tadpole</tissue>
    </source>
</reference>
<reference key="2">
    <citation type="submission" date="2004-10" db="EMBL/GenBank/DDBJ databases">
        <authorList>
            <consortium name="NIH - Xenopus Gene Collection (XGC) project"/>
        </authorList>
    </citation>
    <scope>NUCLEOTIDE SEQUENCE [LARGE SCALE MRNA]</scope>
    <source>
        <tissue>Kidney</tissue>
    </source>
</reference>
<comment type="function">
    <text evidence="1 2">Transcriptional activator that recognizes and binds to the DNA sequence 5'-[AG]TAAA[TC]A-3' and regulates different processes, such as apoptosis and autophagy. Acts as a positive regulator of autophagy in skeletal muscle: in starved cells, enters the nucleus following dephosphorylation and binds the promoters of autophagy genes, thereby activating their expression, resulting in proteolysis of skeletal muscle proteins (By similarity). Triggers apoptosis in the absence of survival factors, including neuronal cell death upon oxidative stress (By similarity). In response to metabolic stress, translocates into the mitochondria where it promotes mtDNA transcription. Also acts as a key regulator of chondrogenic commitment of skeletal progenitor cells in response to lipid availability: when lipids levels are low, translocates to the nucleus and promotes expression of sox9, which induces chondrogenic commitment and suppresses fatty acid oxidation (By similarity). Also acts as a key regulator of regulatory T-cells (Treg) differentiation (By similarity).</text>
</comment>
<comment type="subcellular location">
    <subcellularLocation>
        <location evidence="1">Cytoplasm</location>
        <location evidence="1">Cytosol</location>
    </subcellularLocation>
    <subcellularLocation>
        <location evidence="1">Nucleus</location>
    </subcellularLocation>
    <text evidence="1">Retention in the cytoplasm contributes to its inactivation (By similarity). Translocates to the nucleus upon oxidative stress and in the absence of survival factors (By similarity).</text>
</comment>
<comment type="tissue specificity">
    <text evidence="5">Localized to the animal hemisphere during early cleavage stages. At the late neurula, localized in the anterior neural plate, neural crest cells and in the hatching gland (PubMed:15567714). As development progresses, expression becomes less localized, being observed in a variety of organs and tissues including the head, branchial arches and somites by stage 32 (PubMed:15567714).</text>
</comment>
<comment type="developmental stage">
    <text evidence="5">Expressed both maternally and zygotically. Maternal expression decreases during early cleavage stages becoming absent during gastrulation (PubMed:15567714). Zygotic expression begins during neurulation and expression levels decrease rapidly through the early tadpole stages before becoming enhanced again up till stage 39 (PubMed:15567714).</text>
</comment>
<comment type="PTM">
    <text evidence="1">Dephosphorylation may promote translocation to the nucleus where the protein induces transcription of target genes and triggers apoptosis.</text>
</comment>
<gene>
    <name evidence="6" type="primary">foxo3</name>
</gene>
<protein>
    <recommendedName>
        <fullName evidence="7">Forkhead box protein O3</fullName>
        <shortName evidence="6">FoxO3</shortName>
        <shortName evidence="6">xFoxO3</shortName>
    </recommendedName>
</protein>